<dbReference type="EMBL" id="X75772">
    <property type="protein sequence ID" value="CAA53394.1"/>
    <property type="molecule type" value="Genomic_DNA"/>
</dbReference>
<dbReference type="SMR" id="Q31652"/>
<dbReference type="GO" id="GO:0005743">
    <property type="term" value="C:mitochondrial inner membrane"/>
    <property type="evidence" value="ECO:0007669"/>
    <property type="project" value="UniProtKB-SubCell"/>
</dbReference>
<dbReference type="GO" id="GO:0046872">
    <property type="term" value="F:metal ion binding"/>
    <property type="evidence" value="ECO:0007669"/>
    <property type="project" value="UniProtKB-KW"/>
</dbReference>
<dbReference type="GO" id="GO:0008121">
    <property type="term" value="F:ubiquinol-cytochrome-c reductase activity"/>
    <property type="evidence" value="ECO:0007669"/>
    <property type="project" value="TreeGrafter"/>
</dbReference>
<dbReference type="GO" id="GO:0006122">
    <property type="term" value="P:mitochondrial electron transport, ubiquinol to cytochrome c"/>
    <property type="evidence" value="ECO:0007669"/>
    <property type="project" value="TreeGrafter"/>
</dbReference>
<dbReference type="Gene3D" id="1.20.810.10">
    <property type="entry name" value="Cytochrome Bc1 Complex, Chain C"/>
    <property type="match status" value="1"/>
</dbReference>
<dbReference type="InterPro" id="IPR005797">
    <property type="entry name" value="Cyt_b/b6_N"/>
</dbReference>
<dbReference type="InterPro" id="IPR027387">
    <property type="entry name" value="Cytb/b6-like_sf"/>
</dbReference>
<dbReference type="InterPro" id="IPR016174">
    <property type="entry name" value="Di-haem_cyt_TM"/>
</dbReference>
<dbReference type="PANTHER" id="PTHR19271">
    <property type="entry name" value="CYTOCHROME B"/>
    <property type="match status" value="1"/>
</dbReference>
<dbReference type="PANTHER" id="PTHR19271:SF16">
    <property type="entry name" value="CYTOCHROME B"/>
    <property type="match status" value="1"/>
</dbReference>
<dbReference type="Pfam" id="PF00033">
    <property type="entry name" value="Cytochrome_B"/>
    <property type="match status" value="1"/>
</dbReference>
<dbReference type="SUPFAM" id="SSF81342">
    <property type="entry name" value="Transmembrane di-heme cytochromes"/>
    <property type="match status" value="1"/>
</dbReference>
<dbReference type="PROSITE" id="PS51002">
    <property type="entry name" value="CYTB_NTER"/>
    <property type="match status" value="1"/>
</dbReference>
<geneLocation type="mitochondrion"/>
<reference key="1">
    <citation type="journal article" date="1993" name="J. Mol. Evol.">
        <title>Sequence evolution in and around the mitochondrial control region in birds.</title>
        <authorList>
            <person name="Quinn T.W."/>
            <person name="Wilson A.C."/>
        </authorList>
    </citation>
    <scope>NUCLEOTIDE SEQUENCE [GENOMIC DNA]</scope>
</reference>
<organism>
    <name type="scientific">Anser caerulescens</name>
    <name type="common">Snow goose</name>
    <name type="synonym">Chen caerulescens</name>
    <dbReference type="NCBI Taxonomy" id="8849"/>
    <lineage>
        <taxon>Eukaryota</taxon>
        <taxon>Metazoa</taxon>
        <taxon>Chordata</taxon>
        <taxon>Craniata</taxon>
        <taxon>Vertebrata</taxon>
        <taxon>Euteleostomi</taxon>
        <taxon>Archelosauria</taxon>
        <taxon>Archosauria</taxon>
        <taxon>Dinosauria</taxon>
        <taxon>Saurischia</taxon>
        <taxon>Theropoda</taxon>
        <taxon>Coelurosauria</taxon>
        <taxon>Aves</taxon>
        <taxon>Neognathae</taxon>
        <taxon>Galloanserae</taxon>
        <taxon>Anseriformes</taxon>
        <taxon>Anatidae</taxon>
        <taxon>Anserinae</taxon>
        <taxon>Anser</taxon>
    </lineage>
</organism>
<accession>Q31652</accession>
<feature type="chain" id="PRO_0000060589" description="Cytochrome b">
    <location>
        <begin position="1"/>
        <end position="74" status="greater than"/>
    </location>
</feature>
<feature type="transmembrane region" description="Helical" evidence="3">
    <location>
        <begin position="34"/>
        <end position="54"/>
    </location>
</feature>
<feature type="non-terminal residue">
    <location>
        <position position="74"/>
    </location>
</feature>
<gene>
    <name type="primary">MT-CYB</name>
    <name type="synonym">COB</name>
    <name type="synonym">CYTB</name>
    <name type="synonym">MTCYB</name>
</gene>
<keyword id="KW-0249">Electron transport</keyword>
<keyword id="KW-0349">Heme</keyword>
<keyword id="KW-0408">Iron</keyword>
<keyword id="KW-0472">Membrane</keyword>
<keyword id="KW-0479">Metal-binding</keyword>
<keyword id="KW-0496">Mitochondrion</keyword>
<keyword id="KW-0999">Mitochondrion inner membrane</keyword>
<keyword id="KW-0679">Respiratory chain</keyword>
<keyword id="KW-0812">Transmembrane</keyword>
<keyword id="KW-1133">Transmembrane helix</keyword>
<keyword id="KW-0813">Transport</keyword>
<keyword id="KW-0830">Ubiquinone</keyword>
<name>CYB_ANSCE</name>
<protein>
    <recommendedName>
        <fullName>Cytochrome b</fullName>
    </recommendedName>
    <alternativeName>
        <fullName>Complex III subunit 3</fullName>
    </alternativeName>
    <alternativeName>
        <fullName>Complex III subunit III</fullName>
    </alternativeName>
    <alternativeName>
        <fullName>Cytochrome b-c1 complex subunit 3</fullName>
    </alternativeName>
    <alternativeName>
        <fullName>Ubiquinol-cytochrome-c reductase complex cytochrome b subunit</fullName>
    </alternativeName>
</protein>
<sequence length="74" mass="8080">MAPNIRKSHPLLKMINNSLIDLPAPSNISAWWNFGSLLAICLVTQILTGLLLAMHYTADTSLAFSSVAHTCRDV</sequence>
<comment type="function">
    <text evidence="2">Component of the ubiquinol-cytochrome c reductase complex (complex III or cytochrome b-c1 complex) that is part of the mitochondrial respiratory chain. The b-c1 complex mediates electron transfer from ubiquinol to cytochrome c. Contributes to the generation of a proton gradient across the mitochondrial membrane that is then used for ATP synthesis.</text>
</comment>
<comment type="cofactor">
    <cofactor evidence="2">
        <name>heme</name>
        <dbReference type="ChEBI" id="CHEBI:30413"/>
    </cofactor>
    <text evidence="2">Binds 2 heme groups non-covalently.</text>
</comment>
<comment type="subunit">
    <text evidence="2">The cytochrome bc1 complex contains 11 subunits: 3 respiratory subunits (MT-CYB, CYC1 and UQCRFS1), 2 core proteins (UQCRC1 and UQCRC2) and 6 low-molecular weight proteins (UQCRH/QCR6, UQCRB/QCR7, UQCRQ/QCR8, UQCR10/QCR9, UQCR11/QCR10 and a cleavage product of UQCRFS1). This cytochrome bc1 complex then forms a dimer.</text>
</comment>
<comment type="subcellular location">
    <subcellularLocation>
        <location evidence="2">Mitochondrion inner membrane</location>
        <topology evidence="2">Multi-pass membrane protein</topology>
    </subcellularLocation>
</comment>
<comment type="miscellaneous">
    <text evidence="1">Heme 1 (or BL or b562) is low-potential and absorbs at about 562 nm, and heme 2 (or BH or b566) is high-potential and absorbs at about 566 nm.</text>
</comment>
<comment type="similarity">
    <text evidence="3">Belongs to the cytochrome b family.</text>
</comment>
<comment type="caution">
    <text evidence="2">The full-length protein contains only eight transmembrane helices, not nine as predicted by bioinformatics tools.</text>
</comment>
<evidence type="ECO:0000250" key="1"/>
<evidence type="ECO:0000250" key="2">
    <source>
        <dbReference type="UniProtKB" id="P00157"/>
    </source>
</evidence>
<evidence type="ECO:0000255" key="3">
    <source>
        <dbReference type="PROSITE-ProRule" id="PRU00968"/>
    </source>
</evidence>
<proteinExistence type="inferred from homology"/>